<organism>
    <name type="scientific">Methanococcus maripaludis (strain C5 / ATCC BAA-1333)</name>
    <dbReference type="NCBI Taxonomy" id="402880"/>
    <lineage>
        <taxon>Archaea</taxon>
        <taxon>Methanobacteriati</taxon>
        <taxon>Methanobacteriota</taxon>
        <taxon>Methanomada group</taxon>
        <taxon>Methanococci</taxon>
        <taxon>Methanococcales</taxon>
        <taxon>Methanococcaceae</taxon>
        <taxon>Methanococcus</taxon>
    </lineage>
</organism>
<protein>
    <recommendedName>
        <fullName evidence="1">Adenylosuccinate synthetase</fullName>
        <shortName evidence="1">AMPSase</shortName>
        <shortName evidence="1">AdSS</shortName>
        <ecNumber evidence="1">6.3.4.4</ecNumber>
    </recommendedName>
    <alternativeName>
        <fullName evidence="1">IMP--aspartate ligase</fullName>
    </alternativeName>
</protein>
<reference key="1">
    <citation type="submission" date="2007-03" db="EMBL/GenBank/DDBJ databases">
        <title>Complete sequence of chromosome of Methanococcus maripaludis C5.</title>
        <authorList>
            <consortium name="US DOE Joint Genome Institute"/>
            <person name="Copeland A."/>
            <person name="Lucas S."/>
            <person name="Lapidus A."/>
            <person name="Barry K."/>
            <person name="Glavina del Rio T."/>
            <person name="Dalin E."/>
            <person name="Tice H."/>
            <person name="Pitluck S."/>
            <person name="Chertkov O."/>
            <person name="Brettin T."/>
            <person name="Bruce D."/>
            <person name="Han C."/>
            <person name="Detter J.C."/>
            <person name="Schmutz J."/>
            <person name="Larimer F."/>
            <person name="Land M."/>
            <person name="Hauser L."/>
            <person name="Kyrpides N."/>
            <person name="Mikhailova N."/>
            <person name="Sieprawska-Lupa M."/>
            <person name="Whitman W.B."/>
            <person name="Richardson P."/>
        </authorList>
    </citation>
    <scope>NUCLEOTIDE SEQUENCE [LARGE SCALE GENOMIC DNA]</scope>
    <source>
        <strain>C5 / ATCC BAA-1333</strain>
    </source>
</reference>
<comment type="function">
    <text evidence="1">Plays an important role in the de novo pathway of purine nucleotide biosynthesis. Catalyzes the first committed step in the biosynthesis of AMP from IMP.</text>
</comment>
<comment type="catalytic activity">
    <reaction evidence="1">
        <text>IMP + L-aspartate + GTP = N(6)-(1,2-dicarboxyethyl)-AMP + GDP + phosphate + 2 H(+)</text>
        <dbReference type="Rhea" id="RHEA:15753"/>
        <dbReference type="ChEBI" id="CHEBI:15378"/>
        <dbReference type="ChEBI" id="CHEBI:29991"/>
        <dbReference type="ChEBI" id="CHEBI:37565"/>
        <dbReference type="ChEBI" id="CHEBI:43474"/>
        <dbReference type="ChEBI" id="CHEBI:57567"/>
        <dbReference type="ChEBI" id="CHEBI:58053"/>
        <dbReference type="ChEBI" id="CHEBI:58189"/>
        <dbReference type="EC" id="6.3.4.4"/>
    </reaction>
</comment>
<comment type="cofactor">
    <cofactor evidence="1">
        <name>Mg(2+)</name>
        <dbReference type="ChEBI" id="CHEBI:18420"/>
    </cofactor>
    <text evidence="1">Binds 1 Mg(2+) ion per subunit.</text>
</comment>
<comment type="pathway">
    <text evidence="1">Purine metabolism; AMP biosynthesis via de novo pathway; AMP from IMP: step 1/2.</text>
</comment>
<comment type="subunit">
    <text evidence="1">Homodimer.</text>
</comment>
<comment type="subcellular location">
    <subcellularLocation>
        <location evidence="1">Cytoplasm</location>
    </subcellularLocation>
</comment>
<comment type="similarity">
    <text evidence="1">Belongs to the adenylosuccinate synthetase family.</text>
</comment>
<name>PURA_METM5</name>
<keyword id="KW-0963">Cytoplasm</keyword>
<keyword id="KW-0342">GTP-binding</keyword>
<keyword id="KW-0436">Ligase</keyword>
<keyword id="KW-0460">Magnesium</keyword>
<keyword id="KW-0479">Metal-binding</keyword>
<keyword id="KW-0547">Nucleotide-binding</keyword>
<keyword id="KW-0658">Purine biosynthesis</keyword>
<evidence type="ECO:0000255" key="1">
    <source>
        <dbReference type="HAMAP-Rule" id="MF_00011"/>
    </source>
</evidence>
<gene>
    <name evidence="1" type="primary">purA</name>
    <name type="ordered locus">MmarC5_0146</name>
</gene>
<proteinExistence type="inferred from homology"/>
<accession>A4FW92</accession>
<sequence>MTCTIVVGGQWGDEGKGKIISYLCKKDNPSIIARGGVGPNAGHTVEVDGEKYGIRMVPTGFPNVNAKLAVGAGVLTDPEVLLKEIKMLEKFNVGERMIIDYRCGIIEDVHKETDKSNEHLSKEIGSTGTGCGPANVDRAMRTLKQGKDVESISKYLGDVSEEVNEALESGDNVLIEGTQGSLLSLFYGSYPYVTSKDTNAASFAADVGVGPTKIDEVVAVFKSYPTRVGEGPFPTEMTVEEAESLGVVEYGTVTGRRRRVGYFDHDLAKKVCRLNGATQIAITCLDKYDTDCYGIIEYDKLSEKGKAFIKEVEEKVGVKVTLISTGPELGQTIDVRK</sequence>
<feature type="chain" id="PRO_1000000858" description="Adenylosuccinate synthetase">
    <location>
        <begin position="1"/>
        <end position="337"/>
    </location>
</feature>
<feature type="active site" description="Proton acceptor" evidence="1">
    <location>
        <position position="13"/>
    </location>
</feature>
<feature type="active site" description="Proton donor" evidence="1">
    <location>
        <position position="43"/>
    </location>
</feature>
<feature type="binding site" evidence="1">
    <location>
        <begin position="12"/>
        <end position="18"/>
    </location>
    <ligand>
        <name>GTP</name>
        <dbReference type="ChEBI" id="CHEBI:37565"/>
    </ligand>
</feature>
<feature type="binding site" description="in other chain" evidence="1">
    <location>
        <begin position="13"/>
        <end position="16"/>
    </location>
    <ligand>
        <name>IMP</name>
        <dbReference type="ChEBI" id="CHEBI:58053"/>
        <note>ligand shared between dimeric partners</note>
    </ligand>
</feature>
<feature type="binding site" evidence="1">
    <location>
        <position position="13"/>
    </location>
    <ligand>
        <name>Mg(2+)</name>
        <dbReference type="ChEBI" id="CHEBI:18420"/>
    </ligand>
</feature>
<feature type="binding site" description="in other chain" evidence="1">
    <location>
        <begin position="40"/>
        <end position="43"/>
    </location>
    <ligand>
        <name>IMP</name>
        <dbReference type="ChEBI" id="CHEBI:58053"/>
        <note>ligand shared between dimeric partners</note>
    </ligand>
</feature>
<feature type="binding site" evidence="1">
    <location>
        <begin position="42"/>
        <end position="44"/>
    </location>
    <ligand>
        <name>GTP</name>
        <dbReference type="ChEBI" id="CHEBI:37565"/>
    </ligand>
</feature>
<feature type="binding site" evidence="1">
    <location>
        <position position="42"/>
    </location>
    <ligand>
        <name>Mg(2+)</name>
        <dbReference type="ChEBI" id="CHEBI:18420"/>
    </ligand>
</feature>
<feature type="binding site" description="in other chain" evidence="1">
    <location>
        <position position="127"/>
    </location>
    <ligand>
        <name>IMP</name>
        <dbReference type="ChEBI" id="CHEBI:58053"/>
        <note>ligand shared between dimeric partners</note>
    </ligand>
</feature>
<feature type="binding site" evidence="1">
    <location>
        <position position="141"/>
    </location>
    <ligand>
        <name>IMP</name>
        <dbReference type="ChEBI" id="CHEBI:58053"/>
        <note>ligand shared between dimeric partners</note>
    </ligand>
</feature>
<feature type="binding site" description="in other chain" evidence="1">
    <location>
        <position position="179"/>
    </location>
    <ligand>
        <name>IMP</name>
        <dbReference type="ChEBI" id="CHEBI:58053"/>
        <note>ligand shared between dimeric partners</note>
    </ligand>
</feature>
<feature type="binding site" description="in other chain" evidence="1">
    <location>
        <position position="194"/>
    </location>
    <ligand>
        <name>IMP</name>
        <dbReference type="ChEBI" id="CHEBI:58053"/>
        <note>ligand shared between dimeric partners</note>
    </ligand>
</feature>
<feature type="binding site" evidence="1">
    <location>
        <begin position="252"/>
        <end position="258"/>
    </location>
    <ligand>
        <name>substrate</name>
    </ligand>
</feature>
<feature type="binding site" description="in other chain" evidence="1">
    <location>
        <position position="256"/>
    </location>
    <ligand>
        <name>IMP</name>
        <dbReference type="ChEBI" id="CHEBI:58053"/>
        <note>ligand shared between dimeric partners</note>
    </ligand>
</feature>
<feature type="binding site" evidence="1">
    <location>
        <position position="258"/>
    </location>
    <ligand>
        <name>GTP</name>
        <dbReference type="ChEBI" id="CHEBI:37565"/>
    </ligand>
</feature>
<feature type="binding site" evidence="1">
    <location>
        <begin position="284"/>
        <end position="286"/>
    </location>
    <ligand>
        <name>GTP</name>
        <dbReference type="ChEBI" id="CHEBI:37565"/>
    </ligand>
</feature>
<feature type="binding site" evidence="1">
    <location>
        <begin position="324"/>
        <end position="326"/>
    </location>
    <ligand>
        <name>GTP</name>
        <dbReference type="ChEBI" id="CHEBI:37565"/>
    </ligand>
</feature>
<dbReference type="EC" id="6.3.4.4" evidence="1"/>
<dbReference type="EMBL" id="CP000609">
    <property type="protein sequence ID" value="ABO34463.1"/>
    <property type="molecule type" value="Genomic_DNA"/>
</dbReference>
<dbReference type="RefSeq" id="WP_011867923.1">
    <property type="nucleotide sequence ID" value="NC_009135.1"/>
</dbReference>
<dbReference type="SMR" id="A4FW92"/>
<dbReference type="STRING" id="402880.MmarC5_0146"/>
<dbReference type="GeneID" id="4927833"/>
<dbReference type="KEGG" id="mmq:MmarC5_0146"/>
<dbReference type="eggNOG" id="arCOG04387">
    <property type="taxonomic scope" value="Archaea"/>
</dbReference>
<dbReference type="HOGENOM" id="CLU_029848_0_0_2"/>
<dbReference type="OrthoDB" id="372247at2157"/>
<dbReference type="UniPathway" id="UPA00075">
    <property type="reaction ID" value="UER00335"/>
</dbReference>
<dbReference type="Proteomes" id="UP000000253">
    <property type="component" value="Chromosome"/>
</dbReference>
<dbReference type="GO" id="GO:0005737">
    <property type="term" value="C:cytoplasm"/>
    <property type="evidence" value="ECO:0007669"/>
    <property type="project" value="UniProtKB-SubCell"/>
</dbReference>
<dbReference type="GO" id="GO:0004019">
    <property type="term" value="F:adenylosuccinate synthase activity"/>
    <property type="evidence" value="ECO:0007669"/>
    <property type="project" value="UniProtKB-UniRule"/>
</dbReference>
<dbReference type="GO" id="GO:0005525">
    <property type="term" value="F:GTP binding"/>
    <property type="evidence" value="ECO:0007669"/>
    <property type="project" value="UniProtKB-UniRule"/>
</dbReference>
<dbReference type="GO" id="GO:0000287">
    <property type="term" value="F:magnesium ion binding"/>
    <property type="evidence" value="ECO:0007669"/>
    <property type="project" value="UniProtKB-UniRule"/>
</dbReference>
<dbReference type="GO" id="GO:0044208">
    <property type="term" value="P:'de novo' AMP biosynthetic process"/>
    <property type="evidence" value="ECO:0007669"/>
    <property type="project" value="UniProtKB-UniRule"/>
</dbReference>
<dbReference type="GO" id="GO:0046040">
    <property type="term" value="P:IMP metabolic process"/>
    <property type="evidence" value="ECO:0007669"/>
    <property type="project" value="TreeGrafter"/>
</dbReference>
<dbReference type="CDD" id="cd03108">
    <property type="entry name" value="AdSS"/>
    <property type="match status" value="1"/>
</dbReference>
<dbReference type="Gene3D" id="3.40.440.10">
    <property type="entry name" value="Adenylosuccinate Synthetase, subunit A, domain 1"/>
    <property type="match status" value="1"/>
</dbReference>
<dbReference type="Gene3D" id="3.90.170.10">
    <property type="entry name" value="Adenylosuccinate Synthetase, subunit A, domain 3"/>
    <property type="match status" value="2"/>
</dbReference>
<dbReference type="HAMAP" id="MF_00011">
    <property type="entry name" value="Adenylosucc_synth"/>
    <property type="match status" value="1"/>
</dbReference>
<dbReference type="InterPro" id="IPR018220">
    <property type="entry name" value="Adenylosuccin_syn_GTP-bd"/>
</dbReference>
<dbReference type="InterPro" id="IPR042109">
    <property type="entry name" value="Adenylosuccinate_synth_dom1"/>
</dbReference>
<dbReference type="InterPro" id="IPR042111">
    <property type="entry name" value="Adenylosuccinate_synth_dom3"/>
</dbReference>
<dbReference type="InterPro" id="IPR001114">
    <property type="entry name" value="Adenylosuccinate_synthetase"/>
</dbReference>
<dbReference type="InterPro" id="IPR027417">
    <property type="entry name" value="P-loop_NTPase"/>
</dbReference>
<dbReference type="NCBIfam" id="NF003295">
    <property type="entry name" value="PRK04293.1"/>
    <property type="match status" value="1"/>
</dbReference>
<dbReference type="PANTHER" id="PTHR11846">
    <property type="entry name" value="ADENYLOSUCCINATE SYNTHETASE"/>
    <property type="match status" value="1"/>
</dbReference>
<dbReference type="PANTHER" id="PTHR11846:SF0">
    <property type="entry name" value="ADENYLOSUCCINATE SYNTHETASE"/>
    <property type="match status" value="1"/>
</dbReference>
<dbReference type="Pfam" id="PF00709">
    <property type="entry name" value="Adenylsucc_synt"/>
    <property type="match status" value="2"/>
</dbReference>
<dbReference type="SMART" id="SM00788">
    <property type="entry name" value="Adenylsucc_synt"/>
    <property type="match status" value="1"/>
</dbReference>
<dbReference type="SUPFAM" id="SSF52540">
    <property type="entry name" value="P-loop containing nucleoside triphosphate hydrolases"/>
    <property type="match status" value="1"/>
</dbReference>
<dbReference type="PROSITE" id="PS01266">
    <property type="entry name" value="ADENYLOSUCCIN_SYN_1"/>
    <property type="match status" value="1"/>
</dbReference>